<dbReference type="EMBL" id="AK040932">
    <property type="protein sequence ID" value="BAC30751.1"/>
    <property type="status" value="ALT_INIT"/>
    <property type="molecule type" value="mRNA"/>
</dbReference>
<dbReference type="EMBL" id="AK078145">
    <property type="protein sequence ID" value="BAC37146.1"/>
    <property type="molecule type" value="mRNA"/>
</dbReference>
<dbReference type="EMBL" id="AL663032">
    <property type="status" value="NOT_ANNOTATED_CDS"/>
    <property type="molecule type" value="Genomic_DNA"/>
</dbReference>
<dbReference type="EMBL" id="BC128566">
    <property type="protein sequence ID" value="AAI28567.1"/>
    <property type="molecule type" value="mRNA"/>
</dbReference>
<dbReference type="RefSeq" id="NP_001159909.1">
    <property type="nucleotide sequence ID" value="NM_001166437.1"/>
</dbReference>
<dbReference type="RefSeq" id="NP_766066.2">
    <property type="nucleotide sequence ID" value="NM_172478.3"/>
</dbReference>
<dbReference type="SMR" id="A1A5B6"/>
<dbReference type="BioGRID" id="229113">
    <property type="interactions" value="3"/>
</dbReference>
<dbReference type="FunCoup" id="A1A5B6">
    <property type="interactions" value="2073"/>
</dbReference>
<dbReference type="STRING" id="10090.ENSMUSP00000047838"/>
<dbReference type="GlyGen" id="A1A5B6">
    <property type="glycosylation" value="2 sites"/>
</dbReference>
<dbReference type="iPTMnet" id="A1A5B6"/>
<dbReference type="PhosphoSitePlus" id="A1A5B6"/>
<dbReference type="jPOST" id="A1A5B6"/>
<dbReference type="PaxDb" id="10090-ENSMUSP00000047838"/>
<dbReference type="PeptideAtlas" id="A1A5B6"/>
<dbReference type="ProteomicsDB" id="254652"/>
<dbReference type="Pumba" id="A1A5B6"/>
<dbReference type="Antibodypedia" id="54837">
    <property type="antibodies" value="43 antibodies from 15 providers"/>
</dbReference>
<dbReference type="DNASU" id="209815"/>
<dbReference type="Ensembl" id="ENSMUST00000039892.9">
    <property type="protein sequence ID" value="ENSMUSP00000047838.3"/>
    <property type="gene ID" value="ENSMUSG00000039201.11"/>
</dbReference>
<dbReference type="GeneID" id="209815"/>
<dbReference type="KEGG" id="mmu:209815"/>
<dbReference type="UCSC" id="uc009sog.2">
    <property type="organism name" value="mouse"/>
</dbReference>
<dbReference type="AGR" id="MGI:2444862"/>
<dbReference type="CTD" id="4943"/>
<dbReference type="MGI" id="MGI:2444862">
    <property type="gene designation" value="Tbc1d25"/>
</dbReference>
<dbReference type="VEuPathDB" id="HostDB:ENSMUSG00000039201"/>
<dbReference type="eggNOG" id="KOG2197">
    <property type="taxonomic scope" value="Eukaryota"/>
</dbReference>
<dbReference type="GeneTree" id="ENSGT00940000159173"/>
<dbReference type="InParanoid" id="A1A5B6"/>
<dbReference type="OMA" id="PFERQTS"/>
<dbReference type="OrthoDB" id="10264062at2759"/>
<dbReference type="PhylomeDB" id="A1A5B6"/>
<dbReference type="TreeFam" id="TF323518"/>
<dbReference type="Reactome" id="R-MMU-8854214">
    <property type="pathway name" value="TBC/RABGAPs"/>
</dbReference>
<dbReference type="BioGRID-ORCS" id="209815">
    <property type="hits" value="8 hits in 77 CRISPR screens"/>
</dbReference>
<dbReference type="ChiTaRS" id="Tbc1d25">
    <property type="organism name" value="mouse"/>
</dbReference>
<dbReference type="PRO" id="PR:A1A5B6"/>
<dbReference type="Proteomes" id="UP000000589">
    <property type="component" value="Chromosome X"/>
</dbReference>
<dbReference type="RNAct" id="A1A5B6">
    <property type="molecule type" value="protein"/>
</dbReference>
<dbReference type="Bgee" id="ENSMUSG00000039201">
    <property type="expression patterns" value="Expressed in lumbar dorsal root ganglion and 206 other cell types or tissues"/>
</dbReference>
<dbReference type="ExpressionAtlas" id="A1A5B6">
    <property type="expression patterns" value="baseline and differential"/>
</dbReference>
<dbReference type="GO" id="GO:0005776">
    <property type="term" value="C:autophagosome"/>
    <property type="evidence" value="ECO:0000250"/>
    <property type="project" value="UniProtKB"/>
</dbReference>
<dbReference type="GO" id="GO:0031410">
    <property type="term" value="C:cytoplasmic vesicle"/>
    <property type="evidence" value="ECO:0007669"/>
    <property type="project" value="UniProtKB-KW"/>
</dbReference>
<dbReference type="GO" id="GO:0005096">
    <property type="term" value="F:GTPase activator activity"/>
    <property type="evidence" value="ECO:0000250"/>
    <property type="project" value="UniProtKB"/>
</dbReference>
<dbReference type="GO" id="GO:0006914">
    <property type="term" value="P:autophagy"/>
    <property type="evidence" value="ECO:0007669"/>
    <property type="project" value="UniProtKB-KW"/>
</dbReference>
<dbReference type="GO" id="GO:1901096">
    <property type="term" value="P:regulation of autophagosome maturation"/>
    <property type="evidence" value="ECO:0000250"/>
    <property type="project" value="UniProtKB"/>
</dbReference>
<dbReference type="FunFam" id="1.10.8.270:FF:000020">
    <property type="entry name" value="Putative TBC1 domain family member 25"/>
    <property type="match status" value="1"/>
</dbReference>
<dbReference type="FunFam" id="1.10.472.80:FF:000039">
    <property type="entry name" value="TBC1 domain family member 25 isoform X1"/>
    <property type="match status" value="1"/>
</dbReference>
<dbReference type="Gene3D" id="1.10.8.270">
    <property type="entry name" value="putative rabgap domain of human tbc1 domain family member 14 like domains"/>
    <property type="match status" value="1"/>
</dbReference>
<dbReference type="Gene3D" id="1.10.472.80">
    <property type="entry name" value="Ypt/Rab-GAP domain of gyp1p, domain 3"/>
    <property type="match status" value="2"/>
</dbReference>
<dbReference type="InterPro" id="IPR000195">
    <property type="entry name" value="Rab-GAP-TBC_dom"/>
</dbReference>
<dbReference type="InterPro" id="IPR035969">
    <property type="entry name" value="Rab-GAP_TBC_sf"/>
</dbReference>
<dbReference type="PANTHER" id="PTHR22957:SF333">
    <property type="entry name" value="TBC1 DOMAIN FAMILY MEMBER 25"/>
    <property type="match status" value="1"/>
</dbReference>
<dbReference type="PANTHER" id="PTHR22957">
    <property type="entry name" value="TBC1 DOMAIN FAMILY MEMBER GTPASE-ACTIVATING PROTEIN"/>
    <property type="match status" value="1"/>
</dbReference>
<dbReference type="Pfam" id="PF00566">
    <property type="entry name" value="RabGAP-TBC"/>
    <property type="match status" value="1"/>
</dbReference>
<dbReference type="SMART" id="SM00164">
    <property type="entry name" value="TBC"/>
    <property type="match status" value="1"/>
</dbReference>
<dbReference type="SUPFAM" id="SSF47923">
    <property type="entry name" value="Ypt/Rab-GAP domain of gyp1p"/>
    <property type="match status" value="2"/>
</dbReference>
<dbReference type="PROSITE" id="PS50086">
    <property type="entry name" value="TBC_RABGAP"/>
    <property type="match status" value="1"/>
</dbReference>
<proteinExistence type="evidence at protein level"/>
<organism>
    <name type="scientific">Mus musculus</name>
    <name type="common">Mouse</name>
    <dbReference type="NCBI Taxonomy" id="10090"/>
    <lineage>
        <taxon>Eukaryota</taxon>
        <taxon>Metazoa</taxon>
        <taxon>Chordata</taxon>
        <taxon>Craniata</taxon>
        <taxon>Vertebrata</taxon>
        <taxon>Euteleostomi</taxon>
        <taxon>Mammalia</taxon>
        <taxon>Eutheria</taxon>
        <taxon>Euarchontoglires</taxon>
        <taxon>Glires</taxon>
        <taxon>Rodentia</taxon>
        <taxon>Myomorpha</taxon>
        <taxon>Muroidea</taxon>
        <taxon>Muridae</taxon>
        <taxon>Murinae</taxon>
        <taxon>Mus</taxon>
        <taxon>Mus</taxon>
    </lineage>
</organism>
<sequence length="742" mass="82575">MRPPAQARWEGQGPTAPLRLRSGARWGRGRPHCWVYVRVRVTIGYHLDRDDSGGMATTSAASDSACSAAPPPVGGAQAAAAVEEEEREVVRVRVKKCESFLSPEFRSFAVDPQITSLDVLQHILIRAFDLNGKKNFGISYLARDRLGQETFLSLLSDWDLSTAFATASKPYLQLRVDIRPSEDSPLLEDWDIISPKDVIGSDVLLAEKRSSLTTAALPFTQSILSQVGRTLSKVQQVLSWSYGEDVKPFKPPLSDAEFHTYLNHEGQLSRPEELRLRIYHGGVEPSLRKVVWRYLLNVYPDGLTGRERMDYMKRKSREYEQLKSEWAQRVNPEDLEFIRSTVLKDVLRTDRAHPYYAGPEDGPHLRALHDLLTTYAVTHPQVSYCQGMSDLASPILAVMDHEGHAFVCFCGIMKRLAANFHPDGRAMATKFAHLKLLLRHADPDFYQYLQEAGADDLFFCYRWLLLELKREFAFDDALRMLEVTWSSLPPDPPEHEVELVGPPSQVADTGFGSHRGRPVRQRHMLRPAGGGGGAFEDAVVHLAASSQGPSGGGRLLRQASLDGLQQLRDNMGLRKDHLVQLSHPATLISSKSLSEPLLNSPDPLLSTSSRPDSPSSSSPPSTQEASPSGDIAVGSPLMQEVGSPRDPGKPVPPPPPMGLPPPQEFGRGNPFMLFLCLAILLEHRDHIMRNGLDYNELAMHFDRLVRKHHLGRVLRRAKALFADYLQSEVWDSEEGAEATAPS</sequence>
<feature type="chain" id="PRO_0000288509" description="TBC1 domain family member 25">
    <location>
        <begin position="1"/>
        <end position="742"/>
    </location>
</feature>
<feature type="domain" description="Rab-GAP TBC" evidence="2">
    <location>
        <begin position="282"/>
        <end position="488"/>
    </location>
</feature>
<feature type="region of interest" description="Disordered" evidence="3">
    <location>
        <begin position="1"/>
        <end position="22"/>
    </location>
</feature>
<feature type="region of interest" description="Disordered" evidence="3">
    <location>
        <begin position="592"/>
        <end position="664"/>
    </location>
</feature>
<feature type="compositionally biased region" description="Low complexity" evidence="3">
    <location>
        <begin position="600"/>
        <end position="628"/>
    </location>
</feature>
<feature type="compositionally biased region" description="Pro residues" evidence="3">
    <location>
        <begin position="649"/>
        <end position="663"/>
    </location>
</feature>
<feature type="modified residue" description="Phosphoserine" evidence="6">
    <location>
        <position position="194"/>
    </location>
</feature>
<feature type="modified residue" description="Phosphothreonine" evidence="6">
    <location>
        <position position="214"/>
    </location>
</feature>
<feature type="modified residue" description="Phosphoserine" evidence="6">
    <location>
        <position position="560"/>
    </location>
</feature>
<feature type="sequence conflict" description="In Ref. 1; BAC37146." evidence="5" ref="1">
    <original>T</original>
    <variation>A</variation>
    <location>
        <position position="115"/>
    </location>
</feature>
<feature type="sequence conflict" description="In Ref. 1; BAC30751." evidence="5" ref="1">
    <original>S</original>
    <variation>Y</variation>
    <location>
        <position position="626"/>
    </location>
</feature>
<protein>
    <recommendedName>
        <fullName>TBC1 domain family member 25</fullName>
    </recommendedName>
</protein>
<accession>A1A5B6</accession>
<accession>Q8BIM6</accession>
<accession>Q8BIW8</accession>
<evidence type="ECO:0000250" key="1"/>
<evidence type="ECO:0000255" key="2">
    <source>
        <dbReference type="PROSITE-ProRule" id="PRU00163"/>
    </source>
</evidence>
<evidence type="ECO:0000256" key="3">
    <source>
        <dbReference type="SAM" id="MobiDB-lite"/>
    </source>
</evidence>
<evidence type="ECO:0000269" key="4">
    <source>
    </source>
</evidence>
<evidence type="ECO:0000305" key="5"/>
<evidence type="ECO:0007744" key="6">
    <source>
    </source>
</evidence>
<comment type="function">
    <text evidence="1">Acts as a GTPase-activating protein specific for RAB33B. Involved in the regulation of autophagosome maturation, the process in which autophagosomes fuse with endosomes and lysosomes.</text>
</comment>
<comment type="subunit">
    <text evidence="4">Interacts (via N-terminus) with MAP1LC3B, GABARAP and GABARAPL2.</text>
</comment>
<comment type="subcellular location">
    <subcellularLocation>
        <location evidence="1">Cytoplasm</location>
    </subcellularLocation>
    <subcellularLocation>
        <location evidence="1">Cytoplasmic vesicle</location>
        <location evidence="1">Autophagosome</location>
    </subcellularLocation>
    <text evidence="1">It is dispersed in the cytoplasm under nutrient-rich conditions.</text>
</comment>
<comment type="sequence caution" evidence="5">
    <conflict type="erroneous initiation">
        <sequence resource="EMBL-CDS" id="BAC30751"/>
    </conflict>
</comment>
<keyword id="KW-0072">Autophagy</keyword>
<keyword id="KW-0963">Cytoplasm</keyword>
<keyword id="KW-0968">Cytoplasmic vesicle</keyword>
<keyword id="KW-0343">GTPase activation</keyword>
<keyword id="KW-0597">Phosphoprotein</keyword>
<keyword id="KW-1185">Reference proteome</keyword>
<name>TBC25_MOUSE</name>
<gene>
    <name type="primary">Tbc1d25</name>
</gene>
<reference key="1">
    <citation type="journal article" date="2005" name="Science">
        <title>The transcriptional landscape of the mammalian genome.</title>
        <authorList>
            <person name="Carninci P."/>
            <person name="Kasukawa T."/>
            <person name="Katayama S."/>
            <person name="Gough J."/>
            <person name="Frith M.C."/>
            <person name="Maeda N."/>
            <person name="Oyama R."/>
            <person name="Ravasi T."/>
            <person name="Lenhard B."/>
            <person name="Wells C."/>
            <person name="Kodzius R."/>
            <person name="Shimokawa K."/>
            <person name="Bajic V.B."/>
            <person name="Brenner S.E."/>
            <person name="Batalov S."/>
            <person name="Forrest A.R."/>
            <person name="Zavolan M."/>
            <person name="Davis M.J."/>
            <person name="Wilming L.G."/>
            <person name="Aidinis V."/>
            <person name="Allen J.E."/>
            <person name="Ambesi-Impiombato A."/>
            <person name="Apweiler R."/>
            <person name="Aturaliya R.N."/>
            <person name="Bailey T.L."/>
            <person name="Bansal M."/>
            <person name="Baxter L."/>
            <person name="Beisel K.W."/>
            <person name="Bersano T."/>
            <person name="Bono H."/>
            <person name="Chalk A.M."/>
            <person name="Chiu K.P."/>
            <person name="Choudhary V."/>
            <person name="Christoffels A."/>
            <person name="Clutterbuck D.R."/>
            <person name="Crowe M.L."/>
            <person name="Dalla E."/>
            <person name="Dalrymple B.P."/>
            <person name="de Bono B."/>
            <person name="Della Gatta G."/>
            <person name="di Bernardo D."/>
            <person name="Down T."/>
            <person name="Engstrom P."/>
            <person name="Fagiolini M."/>
            <person name="Faulkner G."/>
            <person name="Fletcher C.F."/>
            <person name="Fukushima T."/>
            <person name="Furuno M."/>
            <person name="Futaki S."/>
            <person name="Gariboldi M."/>
            <person name="Georgii-Hemming P."/>
            <person name="Gingeras T.R."/>
            <person name="Gojobori T."/>
            <person name="Green R.E."/>
            <person name="Gustincich S."/>
            <person name="Harbers M."/>
            <person name="Hayashi Y."/>
            <person name="Hensch T.K."/>
            <person name="Hirokawa N."/>
            <person name="Hill D."/>
            <person name="Huminiecki L."/>
            <person name="Iacono M."/>
            <person name="Ikeo K."/>
            <person name="Iwama A."/>
            <person name="Ishikawa T."/>
            <person name="Jakt M."/>
            <person name="Kanapin A."/>
            <person name="Katoh M."/>
            <person name="Kawasawa Y."/>
            <person name="Kelso J."/>
            <person name="Kitamura H."/>
            <person name="Kitano H."/>
            <person name="Kollias G."/>
            <person name="Krishnan S.P."/>
            <person name="Kruger A."/>
            <person name="Kummerfeld S.K."/>
            <person name="Kurochkin I.V."/>
            <person name="Lareau L.F."/>
            <person name="Lazarevic D."/>
            <person name="Lipovich L."/>
            <person name="Liu J."/>
            <person name="Liuni S."/>
            <person name="McWilliam S."/>
            <person name="Madan Babu M."/>
            <person name="Madera M."/>
            <person name="Marchionni L."/>
            <person name="Matsuda H."/>
            <person name="Matsuzawa S."/>
            <person name="Miki H."/>
            <person name="Mignone F."/>
            <person name="Miyake S."/>
            <person name="Morris K."/>
            <person name="Mottagui-Tabar S."/>
            <person name="Mulder N."/>
            <person name="Nakano N."/>
            <person name="Nakauchi H."/>
            <person name="Ng P."/>
            <person name="Nilsson R."/>
            <person name="Nishiguchi S."/>
            <person name="Nishikawa S."/>
            <person name="Nori F."/>
            <person name="Ohara O."/>
            <person name="Okazaki Y."/>
            <person name="Orlando V."/>
            <person name="Pang K.C."/>
            <person name="Pavan W.J."/>
            <person name="Pavesi G."/>
            <person name="Pesole G."/>
            <person name="Petrovsky N."/>
            <person name="Piazza S."/>
            <person name="Reed J."/>
            <person name="Reid J.F."/>
            <person name="Ring B.Z."/>
            <person name="Ringwald M."/>
            <person name="Rost B."/>
            <person name="Ruan Y."/>
            <person name="Salzberg S.L."/>
            <person name="Sandelin A."/>
            <person name="Schneider C."/>
            <person name="Schoenbach C."/>
            <person name="Sekiguchi K."/>
            <person name="Semple C.A."/>
            <person name="Seno S."/>
            <person name="Sessa L."/>
            <person name="Sheng Y."/>
            <person name="Shibata Y."/>
            <person name="Shimada H."/>
            <person name="Shimada K."/>
            <person name="Silva D."/>
            <person name="Sinclair B."/>
            <person name="Sperling S."/>
            <person name="Stupka E."/>
            <person name="Sugiura K."/>
            <person name="Sultana R."/>
            <person name="Takenaka Y."/>
            <person name="Taki K."/>
            <person name="Tammoja K."/>
            <person name="Tan S.L."/>
            <person name="Tang S."/>
            <person name="Taylor M.S."/>
            <person name="Tegner J."/>
            <person name="Teichmann S.A."/>
            <person name="Ueda H.R."/>
            <person name="van Nimwegen E."/>
            <person name="Verardo R."/>
            <person name="Wei C.L."/>
            <person name="Yagi K."/>
            <person name="Yamanishi H."/>
            <person name="Zabarovsky E."/>
            <person name="Zhu S."/>
            <person name="Zimmer A."/>
            <person name="Hide W."/>
            <person name="Bult C."/>
            <person name="Grimmond S.M."/>
            <person name="Teasdale R.D."/>
            <person name="Liu E.T."/>
            <person name="Brusic V."/>
            <person name="Quackenbush J."/>
            <person name="Wahlestedt C."/>
            <person name="Mattick J.S."/>
            <person name="Hume D.A."/>
            <person name="Kai C."/>
            <person name="Sasaki D."/>
            <person name="Tomaru Y."/>
            <person name="Fukuda S."/>
            <person name="Kanamori-Katayama M."/>
            <person name="Suzuki M."/>
            <person name="Aoki J."/>
            <person name="Arakawa T."/>
            <person name="Iida J."/>
            <person name="Imamura K."/>
            <person name="Itoh M."/>
            <person name="Kato T."/>
            <person name="Kawaji H."/>
            <person name="Kawagashira N."/>
            <person name="Kawashima T."/>
            <person name="Kojima M."/>
            <person name="Kondo S."/>
            <person name="Konno H."/>
            <person name="Nakano K."/>
            <person name="Ninomiya N."/>
            <person name="Nishio T."/>
            <person name="Okada M."/>
            <person name="Plessy C."/>
            <person name="Shibata K."/>
            <person name="Shiraki T."/>
            <person name="Suzuki S."/>
            <person name="Tagami M."/>
            <person name="Waki K."/>
            <person name="Watahiki A."/>
            <person name="Okamura-Oho Y."/>
            <person name="Suzuki H."/>
            <person name="Kawai J."/>
            <person name="Hayashizaki Y."/>
        </authorList>
    </citation>
    <scope>NUCLEOTIDE SEQUENCE [LARGE SCALE MRNA]</scope>
    <source>
        <strain>C57BL/6J</strain>
        <tissue>Aorta</tissue>
        <tissue>Medulla oblongata</tissue>
    </source>
</reference>
<reference key="2">
    <citation type="journal article" date="2009" name="PLoS Biol.">
        <title>Lineage-specific biology revealed by a finished genome assembly of the mouse.</title>
        <authorList>
            <person name="Church D.M."/>
            <person name="Goodstadt L."/>
            <person name="Hillier L.W."/>
            <person name="Zody M.C."/>
            <person name="Goldstein S."/>
            <person name="She X."/>
            <person name="Bult C.J."/>
            <person name="Agarwala R."/>
            <person name="Cherry J.L."/>
            <person name="DiCuccio M."/>
            <person name="Hlavina W."/>
            <person name="Kapustin Y."/>
            <person name="Meric P."/>
            <person name="Maglott D."/>
            <person name="Birtle Z."/>
            <person name="Marques A.C."/>
            <person name="Graves T."/>
            <person name="Zhou S."/>
            <person name="Teague B."/>
            <person name="Potamousis K."/>
            <person name="Churas C."/>
            <person name="Place M."/>
            <person name="Herschleb J."/>
            <person name="Runnheim R."/>
            <person name="Forrest D."/>
            <person name="Amos-Landgraf J."/>
            <person name="Schwartz D.C."/>
            <person name="Cheng Z."/>
            <person name="Lindblad-Toh K."/>
            <person name="Eichler E.E."/>
            <person name="Ponting C.P."/>
        </authorList>
    </citation>
    <scope>NUCLEOTIDE SEQUENCE [LARGE SCALE GENOMIC DNA]</scope>
    <source>
        <strain>C57BL/6J</strain>
    </source>
</reference>
<reference key="3">
    <citation type="journal article" date="2004" name="Genome Res.">
        <title>The status, quality, and expansion of the NIH full-length cDNA project: the Mammalian Gene Collection (MGC).</title>
        <authorList>
            <consortium name="The MGC Project Team"/>
        </authorList>
    </citation>
    <scope>NUCLEOTIDE SEQUENCE [LARGE SCALE MRNA]</scope>
</reference>
<reference key="4">
    <citation type="journal article" date="2010" name="Cell">
        <title>A tissue-specific atlas of mouse protein phosphorylation and expression.</title>
        <authorList>
            <person name="Huttlin E.L."/>
            <person name="Jedrychowski M.P."/>
            <person name="Elias J.E."/>
            <person name="Goswami T."/>
            <person name="Rad R."/>
            <person name="Beausoleil S.A."/>
            <person name="Villen J."/>
            <person name="Haas W."/>
            <person name="Sowa M.E."/>
            <person name="Gygi S.P."/>
        </authorList>
    </citation>
    <scope>PHOSPHORYLATION [LARGE SCALE ANALYSIS] AT SER-194; THR-214 AND SER-560</scope>
    <scope>IDENTIFICATION BY MASS SPECTROMETRY [LARGE SCALE ANALYSIS]</scope>
    <source>
        <tissue>Brain</tissue>
        <tissue>Brown adipose tissue</tissue>
        <tissue>Lung</tissue>
        <tissue>Spleen</tissue>
    </source>
</reference>
<reference key="5">
    <citation type="journal article" date="2011" name="J. Cell Biol.">
        <title>OATL1, a novel autophagosome-resident Rab33B-GAP, regulates autophagosomal maturation.</title>
        <authorList>
            <person name="Itoh T."/>
            <person name="Kanno E."/>
            <person name="Uemura T."/>
            <person name="Waguri S."/>
            <person name="Fukuda M."/>
        </authorList>
    </citation>
    <scope>INTERACTION WITH MAP1LC3B; GABARAP AND GABARAPL2</scope>
</reference>